<organism>
    <name type="scientific">Saccharomyces cerevisiae (strain ATCC 204508 / S288c)</name>
    <name type="common">Baker's yeast</name>
    <dbReference type="NCBI Taxonomy" id="559292"/>
    <lineage>
        <taxon>Eukaryota</taxon>
        <taxon>Fungi</taxon>
        <taxon>Dikarya</taxon>
        <taxon>Ascomycota</taxon>
        <taxon>Saccharomycotina</taxon>
        <taxon>Saccharomycetes</taxon>
        <taxon>Saccharomycetales</taxon>
        <taxon>Saccharomycetaceae</taxon>
        <taxon>Saccharomyces</taxon>
    </lineage>
</organism>
<feature type="initiator methionine" description="Removed" evidence="8">
    <location>
        <position position="1"/>
    </location>
</feature>
<feature type="chain" id="PRO_0000074552" description="Glucosamine 6-phosphate N-acetyltransferase">
    <location>
        <begin position="2"/>
        <end position="159"/>
    </location>
</feature>
<feature type="domain" description="N-acetyltransferase" evidence="1">
    <location>
        <begin position="28"/>
        <end position="159"/>
    </location>
</feature>
<feature type="binding site" evidence="6">
    <location>
        <position position="28"/>
    </location>
    <ligand>
        <name>D-glucosamine 6-phosphate</name>
        <dbReference type="ChEBI" id="CHEBI:58725"/>
    </ligand>
</feature>
<feature type="binding site" evidence="6">
    <location>
        <begin position="86"/>
        <end position="89"/>
    </location>
    <ligand>
        <name>D-glucosamine 6-phosphate</name>
        <dbReference type="ChEBI" id="CHEBI:58725"/>
    </ligand>
</feature>
<feature type="binding site" evidence="6">
    <location>
        <begin position="98"/>
        <end position="100"/>
    </location>
    <ligand>
        <name>D-glucosamine 6-phosphate</name>
        <dbReference type="ChEBI" id="CHEBI:58725"/>
    </ligand>
</feature>
<feature type="binding site" evidence="2 7">
    <location>
        <begin position="100"/>
        <end position="102"/>
    </location>
    <ligand>
        <name>acetyl-CoA</name>
        <dbReference type="ChEBI" id="CHEBI:57288"/>
    </ligand>
</feature>
<feature type="binding site" evidence="2 7">
    <location>
        <begin position="108"/>
        <end position="113"/>
    </location>
    <ligand>
        <name>acetyl-CoA</name>
        <dbReference type="ChEBI" id="CHEBI:57288"/>
    </ligand>
</feature>
<feature type="binding site" evidence="6">
    <location>
        <begin position="129"/>
        <end position="130"/>
    </location>
    <ligand>
        <name>D-glucosamine 6-phosphate</name>
        <dbReference type="ChEBI" id="CHEBI:58725"/>
    </ligand>
</feature>
<feature type="binding site" evidence="6">
    <location>
        <position position="134"/>
    </location>
    <ligand>
        <name>D-glucosamine 6-phosphate</name>
        <dbReference type="ChEBI" id="CHEBI:58725"/>
    </ligand>
</feature>
<feature type="binding site" evidence="2 7">
    <location>
        <begin position="143"/>
        <end position="145"/>
    </location>
    <ligand>
        <name>acetyl-CoA</name>
        <dbReference type="ChEBI" id="CHEBI:57288"/>
    </ligand>
</feature>
<feature type="binding site" evidence="6">
    <location>
        <position position="158"/>
    </location>
    <ligand>
        <name>D-glucosamine 6-phosphate</name>
        <dbReference type="ChEBI" id="CHEBI:58725"/>
    </ligand>
</feature>
<feature type="modified residue" description="N-acetylserine" evidence="8">
    <location>
        <position position="2"/>
    </location>
</feature>
<feature type="sequence conflict" description="In Ref. 4; CAA86352." evidence="5" ref="4">
    <original>GKLLIDQLVTIGFDYGCYKIILDCDEKNVKFYEKCGFSNAGVEMQIRK</original>
    <variation>ASS</variation>
    <location>
        <begin position="112"/>
        <end position="159"/>
    </location>
</feature>
<feature type="turn" evidence="10">
    <location>
        <begin position="4"/>
        <end position="6"/>
    </location>
</feature>
<feature type="strand" evidence="9">
    <location>
        <begin position="7"/>
        <end position="11"/>
    </location>
</feature>
<feature type="helix" evidence="9">
    <location>
        <begin position="14"/>
        <end position="16"/>
    </location>
</feature>
<feature type="helix" evidence="9">
    <location>
        <begin position="17"/>
        <end position="24"/>
    </location>
</feature>
<feature type="turn" evidence="9">
    <location>
        <begin position="25"/>
        <end position="27"/>
    </location>
</feature>
<feature type="helix" evidence="9">
    <location>
        <begin position="35"/>
        <end position="47"/>
    </location>
</feature>
<feature type="strand" evidence="9">
    <location>
        <begin position="60"/>
        <end position="62"/>
    </location>
</feature>
<feature type="strand" evidence="9">
    <location>
        <begin position="65"/>
        <end position="69"/>
    </location>
</feature>
<feature type="turn" evidence="9">
    <location>
        <begin position="70"/>
        <end position="73"/>
    </location>
</feature>
<feature type="strand" evidence="9">
    <location>
        <begin position="74"/>
        <end position="85"/>
    </location>
</feature>
<feature type="helix" evidence="9">
    <location>
        <begin position="88"/>
        <end position="91"/>
    </location>
</feature>
<feature type="strand" evidence="9">
    <location>
        <begin position="93"/>
        <end position="102"/>
    </location>
</feature>
<feature type="helix" evidence="9">
    <location>
        <begin position="104"/>
        <end position="106"/>
    </location>
</feature>
<feature type="helix" evidence="9">
    <location>
        <begin position="111"/>
        <end position="125"/>
    </location>
</feature>
<feature type="strand" evidence="9">
    <location>
        <begin position="129"/>
        <end position="135"/>
    </location>
</feature>
<feature type="helix" evidence="9">
    <location>
        <begin position="137"/>
        <end position="139"/>
    </location>
</feature>
<feature type="helix" evidence="9">
    <location>
        <begin position="140"/>
        <end position="145"/>
    </location>
</feature>
<feature type="strand" evidence="9">
    <location>
        <begin position="149"/>
        <end position="158"/>
    </location>
</feature>
<evidence type="ECO:0000255" key="1">
    <source>
        <dbReference type="PROSITE-ProRule" id="PRU00532"/>
    </source>
</evidence>
<evidence type="ECO:0000269" key="2">
    <source>
    </source>
</evidence>
<evidence type="ECO:0000269" key="3">
    <source>
    </source>
</evidence>
<evidence type="ECO:0000269" key="4">
    <source>
    </source>
</evidence>
<evidence type="ECO:0000305" key="5"/>
<evidence type="ECO:0000305" key="6">
    <source>
    </source>
</evidence>
<evidence type="ECO:0007744" key="7">
    <source>
        <dbReference type="PDB" id="1I12"/>
    </source>
</evidence>
<evidence type="ECO:0007744" key="8">
    <source>
    </source>
</evidence>
<evidence type="ECO:0007829" key="9">
    <source>
        <dbReference type="PDB" id="1I12"/>
    </source>
</evidence>
<evidence type="ECO:0007829" key="10">
    <source>
        <dbReference type="PDB" id="1I21"/>
    </source>
</evidence>
<reference key="1">
    <citation type="journal article" date="1999" name="J. Biol. Chem.">
        <title>Saccharomyces cerevisiae GNA1, an essential gene encoding a novel acetyltransferase involved in UDP-N-acetylglucosamine synthesis.</title>
        <authorList>
            <person name="Mio T."/>
            <person name="Yamada-Okabe T."/>
            <person name="Arisawa M."/>
            <person name="Yamada-Okabe H."/>
        </authorList>
    </citation>
    <scope>NUCLEOTIDE SEQUENCE [GENOMIC DNA]</scope>
    <scope>CHARACTERIZATION</scope>
    <scope>MUTAGENESIS</scope>
    <scope>CATALYTIC ACTIVITY</scope>
</reference>
<reference key="2">
    <citation type="journal article" date="1995" name="Nat. Genet.">
        <title>Analysis of the nucleotide sequence of chromosome VI from Saccharomyces cerevisiae.</title>
        <authorList>
            <person name="Murakami Y."/>
            <person name="Naitou M."/>
            <person name="Hagiwara H."/>
            <person name="Shibata T."/>
            <person name="Ozawa M."/>
            <person name="Sasanuma S."/>
            <person name="Sasanuma M."/>
            <person name="Tsuchiya Y."/>
            <person name="Soeda E."/>
            <person name="Yokoyama K."/>
            <person name="Yamazaki M."/>
            <person name="Tashiro H."/>
            <person name="Eki T."/>
        </authorList>
    </citation>
    <scope>NUCLEOTIDE SEQUENCE [LARGE SCALE GENOMIC DNA]</scope>
    <source>
        <strain>ATCC 204508 / S288c</strain>
    </source>
</reference>
<reference key="3">
    <citation type="journal article" date="2014" name="G3 (Bethesda)">
        <title>The reference genome sequence of Saccharomyces cerevisiae: Then and now.</title>
        <authorList>
            <person name="Engel S.R."/>
            <person name="Dietrich F.S."/>
            <person name="Fisk D.G."/>
            <person name="Binkley G."/>
            <person name="Balakrishnan R."/>
            <person name="Costanzo M.C."/>
            <person name="Dwight S.S."/>
            <person name="Hitz B.C."/>
            <person name="Karra K."/>
            <person name="Nash R.S."/>
            <person name="Weng S."/>
            <person name="Wong E.D."/>
            <person name="Lloyd P."/>
            <person name="Skrzypek M.S."/>
            <person name="Miyasato S.R."/>
            <person name="Simison M."/>
            <person name="Cherry J.M."/>
        </authorList>
    </citation>
    <scope>GENOME REANNOTATION</scope>
    <source>
        <strain>ATCC 204508 / S288c</strain>
    </source>
</reference>
<reference key="4">
    <citation type="submission" date="1994-09" db="EMBL/GenBank/DDBJ databases">
        <authorList>
            <person name="Barrell B.G."/>
            <person name="Churcher C."/>
            <person name="Rajandream M.A."/>
        </authorList>
    </citation>
    <scope>NUCLEOTIDE SEQUENCE [GENOMIC DNA]</scope>
    <source>
        <strain>ATCC 204511 / S288c / AB972</strain>
    </source>
</reference>
<reference key="5">
    <citation type="journal article" date="2007" name="Genome Res.">
        <title>Approaching a complete repository of sequence-verified protein-encoding clones for Saccharomyces cerevisiae.</title>
        <authorList>
            <person name="Hu Y."/>
            <person name="Rolfs A."/>
            <person name="Bhullar B."/>
            <person name="Murthy T.V.S."/>
            <person name="Zhu C."/>
            <person name="Berger M.F."/>
            <person name="Camargo A.A."/>
            <person name="Kelley F."/>
            <person name="McCarron S."/>
            <person name="Jepson D."/>
            <person name="Richardson A."/>
            <person name="Raphael J."/>
            <person name="Moreira D."/>
            <person name="Taycher E."/>
            <person name="Zuo D."/>
            <person name="Mohr S."/>
            <person name="Kane M.F."/>
            <person name="Williamson J."/>
            <person name="Simpson A.J.G."/>
            <person name="Bulyk M.L."/>
            <person name="Harlow E."/>
            <person name="Marsischky G."/>
            <person name="Kolodner R.D."/>
            <person name="LaBaer J."/>
        </authorList>
    </citation>
    <scope>NUCLEOTIDE SEQUENCE [GENOMIC DNA]</scope>
    <source>
        <strain>ATCC 204508 / S288c</strain>
    </source>
</reference>
<reference key="6">
    <citation type="journal article" date="2003" name="Nature">
        <title>Global analysis of protein expression in yeast.</title>
        <authorList>
            <person name="Ghaemmaghami S."/>
            <person name="Huh W.-K."/>
            <person name="Bower K."/>
            <person name="Howson R.W."/>
            <person name="Belle A."/>
            <person name="Dephoure N."/>
            <person name="O'Shea E.K."/>
            <person name="Weissman J.S."/>
        </authorList>
    </citation>
    <scope>LEVEL OF PROTEIN EXPRESSION [LARGE SCALE ANALYSIS]</scope>
</reference>
<reference key="7">
    <citation type="journal article" date="2012" name="Proc. Natl. Acad. Sci. U.S.A.">
        <title>N-terminal acetylome analyses and functional insights of the N-terminal acetyltransferase NatB.</title>
        <authorList>
            <person name="Van Damme P."/>
            <person name="Lasa M."/>
            <person name="Polevoda B."/>
            <person name="Gazquez C."/>
            <person name="Elosegui-Artola A."/>
            <person name="Kim D.S."/>
            <person name="De Juan-Pardo E."/>
            <person name="Demeyer K."/>
            <person name="Hole K."/>
            <person name="Larrea E."/>
            <person name="Timmerman E."/>
            <person name="Prieto J."/>
            <person name="Arnesen T."/>
            <person name="Sherman F."/>
            <person name="Gevaert K."/>
            <person name="Aldabe R."/>
        </authorList>
    </citation>
    <scope>ACETYLATION [LARGE SCALE ANALYSIS] AT SER-2</scope>
    <scope>CLEAVAGE OF INITIATOR METHIONINE [LARGE SCALE ANALYSIS]</scope>
    <scope>IDENTIFICATION BY MASS SPECTROMETRY [LARGE SCALE ANALYSIS]</scope>
</reference>
<reference key="8">
    <citation type="journal article" date="2001" name="J. Biol. Chem.">
        <title>The crystal structures of Apo and complexed Saccharomyces cerevisiae GNA1 shed light on the catalytic mechanism of an amino-sugar N-acetyltransferase.</title>
        <authorList>
            <person name="Peneff C."/>
            <person name="Mengin-Lecreulx D."/>
            <person name="Bourne Y."/>
        </authorList>
    </citation>
    <scope>X-RAY CRYSTALLOGRAPHY (1.3 ANGSTROMS) IN COMPLEX WITH ACETYL-COENZYME A AND THE SUBSTRATE GLUCOSAMINE-6-PHOSPHATE</scope>
    <scope>SUBUNIT</scope>
</reference>
<accession>P43577</accession>
<accession>D6VTL3</accession>
<dbReference type="EC" id="2.3.1.4" evidence="4"/>
<dbReference type="EMBL" id="AB017626">
    <property type="protein sequence ID" value="BAA36495.1"/>
    <property type="molecule type" value="Genomic_DNA"/>
</dbReference>
<dbReference type="EMBL" id="D50617">
    <property type="protein sequence ID" value="BAA09221.1"/>
    <property type="molecule type" value="Genomic_DNA"/>
</dbReference>
<dbReference type="EMBL" id="Z46255">
    <property type="protein sequence ID" value="CAA86352.1"/>
    <property type="molecule type" value="Genomic_DNA"/>
</dbReference>
<dbReference type="EMBL" id="AY558564">
    <property type="protein sequence ID" value="AAS56890.1"/>
    <property type="molecule type" value="Genomic_DNA"/>
</dbReference>
<dbReference type="EMBL" id="BK006940">
    <property type="protein sequence ID" value="DAA12423.1"/>
    <property type="molecule type" value="Genomic_DNA"/>
</dbReference>
<dbReference type="PIR" id="S56237">
    <property type="entry name" value="S56237"/>
</dbReference>
<dbReference type="RefSeq" id="NP_116637.1">
    <property type="nucleotide sequence ID" value="NM_001179949.1"/>
</dbReference>
<dbReference type="PDB" id="1I12">
    <property type="method" value="X-ray"/>
    <property type="resolution" value="1.30 A"/>
    <property type="chains" value="A/B/C/D=1-159"/>
</dbReference>
<dbReference type="PDB" id="1I1D">
    <property type="method" value="X-ray"/>
    <property type="resolution" value="1.80 A"/>
    <property type="chains" value="A/B/C/D=1-159"/>
</dbReference>
<dbReference type="PDB" id="1I21">
    <property type="method" value="X-ray"/>
    <property type="resolution" value="2.40 A"/>
    <property type="chains" value="A/B/M/N/X/Y=1-159"/>
</dbReference>
<dbReference type="PDBsum" id="1I12"/>
<dbReference type="PDBsum" id="1I1D"/>
<dbReference type="PDBsum" id="1I21"/>
<dbReference type="SMR" id="P43577"/>
<dbReference type="BioGRID" id="31130">
    <property type="interactions" value="312"/>
</dbReference>
<dbReference type="DIP" id="DIP-1349N"/>
<dbReference type="FunCoup" id="P43577">
    <property type="interactions" value="573"/>
</dbReference>
<dbReference type="IntAct" id="P43577">
    <property type="interactions" value="8"/>
</dbReference>
<dbReference type="MINT" id="P43577"/>
<dbReference type="STRING" id="4932.YFL017C"/>
<dbReference type="iPTMnet" id="P43577"/>
<dbReference type="PaxDb" id="4932-YFL017C"/>
<dbReference type="PeptideAtlas" id="P43577"/>
<dbReference type="EnsemblFungi" id="YFL017C_mRNA">
    <property type="protein sequence ID" value="YFL017C"/>
    <property type="gene ID" value="YFL017C"/>
</dbReference>
<dbReference type="GeneID" id="850529"/>
<dbReference type="KEGG" id="sce:YFL017C"/>
<dbReference type="AGR" id="SGD:S000001877"/>
<dbReference type="SGD" id="S000001877">
    <property type="gene designation" value="GNA1"/>
</dbReference>
<dbReference type="VEuPathDB" id="FungiDB:YFL017C"/>
<dbReference type="eggNOG" id="KOG3396">
    <property type="taxonomic scope" value="Eukaryota"/>
</dbReference>
<dbReference type="GeneTree" id="ENSGT00390000008666"/>
<dbReference type="HOGENOM" id="CLU_072095_0_1_1"/>
<dbReference type="InParanoid" id="P43577"/>
<dbReference type="OMA" id="NQRYDWI"/>
<dbReference type="OrthoDB" id="10039976at2759"/>
<dbReference type="BioCyc" id="MetaCyc:YFL017C-MONOMER"/>
<dbReference type="BioCyc" id="YEAST:YFL017C-MONOMER"/>
<dbReference type="Reactome" id="R-SCE-446210">
    <property type="pathway name" value="Synthesis of UDP-N-acetyl-glucosamine"/>
</dbReference>
<dbReference type="SABIO-RK" id="P43577"/>
<dbReference type="UniPathway" id="UPA00113">
    <property type="reaction ID" value="UER00529"/>
</dbReference>
<dbReference type="BioGRID-ORCS" id="850529">
    <property type="hits" value="4 hits in 10 CRISPR screens"/>
</dbReference>
<dbReference type="EvolutionaryTrace" id="P43577"/>
<dbReference type="PRO" id="PR:P43577"/>
<dbReference type="Proteomes" id="UP000002311">
    <property type="component" value="Chromosome VI"/>
</dbReference>
<dbReference type="RNAct" id="P43577">
    <property type="molecule type" value="protein"/>
</dbReference>
<dbReference type="GO" id="GO:0005737">
    <property type="term" value="C:cytoplasm"/>
    <property type="evidence" value="ECO:0007005"/>
    <property type="project" value="SGD"/>
</dbReference>
<dbReference type="GO" id="GO:0005634">
    <property type="term" value="C:nucleus"/>
    <property type="evidence" value="ECO:0007005"/>
    <property type="project" value="SGD"/>
</dbReference>
<dbReference type="GO" id="GO:0004343">
    <property type="term" value="F:glucosamine 6-phosphate N-acetyltransferase activity"/>
    <property type="evidence" value="ECO:0000314"/>
    <property type="project" value="SGD"/>
</dbReference>
<dbReference type="GO" id="GO:0006048">
    <property type="term" value="P:UDP-N-acetylglucosamine biosynthetic process"/>
    <property type="evidence" value="ECO:0000314"/>
    <property type="project" value="SGD"/>
</dbReference>
<dbReference type="CDD" id="cd04301">
    <property type="entry name" value="NAT_SF"/>
    <property type="match status" value="1"/>
</dbReference>
<dbReference type="FunFam" id="3.40.630.30:FF:000136">
    <property type="entry name" value="Glucosamine 6-phosphate N-acetyltransferase"/>
    <property type="match status" value="1"/>
</dbReference>
<dbReference type="Gene3D" id="3.40.630.30">
    <property type="match status" value="1"/>
</dbReference>
<dbReference type="InterPro" id="IPR016181">
    <property type="entry name" value="Acyl_CoA_acyltransferase"/>
</dbReference>
<dbReference type="InterPro" id="IPR000182">
    <property type="entry name" value="GNAT_dom"/>
</dbReference>
<dbReference type="InterPro" id="IPR039143">
    <property type="entry name" value="GNPNAT1-like"/>
</dbReference>
<dbReference type="PANTHER" id="PTHR13355">
    <property type="entry name" value="GLUCOSAMINE 6-PHOSPHATE N-ACETYLTRANSFERASE"/>
    <property type="match status" value="1"/>
</dbReference>
<dbReference type="PANTHER" id="PTHR13355:SF11">
    <property type="entry name" value="GLUCOSAMINE 6-PHOSPHATE N-ACETYLTRANSFERASE"/>
    <property type="match status" value="1"/>
</dbReference>
<dbReference type="Pfam" id="PF00583">
    <property type="entry name" value="Acetyltransf_1"/>
    <property type="match status" value="1"/>
</dbReference>
<dbReference type="SUPFAM" id="SSF55729">
    <property type="entry name" value="Acyl-CoA N-acyltransferases (Nat)"/>
    <property type="match status" value="1"/>
</dbReference>
<dbReference type="PROSITE" id="PS51186">
    <property type="entry name" value="GNAT"/>
    <property type="match status" value="1"/>
</dbReference>
<proteinExistence type="evidence at protein level"/>
<name>GNA1_YEAST</name>
<comment type="catalytic activity">
    <reaction evidence="4">
        <text>D-glucosamine 6-phosphate + acetyl-CoA = N-acetyl-D-glucosamine 6-phosphate + CoA + H(+)</text>
        <dbReference type="Rhea" id="RHEA:10292"/>
        <dbReference type="ChEBI" id="CHEBI:15378"/>
        <dbReference type="ChEBI" id="CHEBI:57287"/>
        <dbReference type="ChEBI" id="CHEBI:57288"/>
        <dbReference type="ChEBI" id="CHEBI:57513"/>
        <dbReference type="ChEBI" id="CHEBI:58725"/>
        <dbReference type="EC" id="2.3.1.4"/>
    </reaction>
</comment>
<comment type="pathway">
    <text>Nucleotide-sugar biosynthesis; UDP-N-acetyl-alpha-D-glucosamine biosynthesis; N-acetyl-alpha-D-glucosamine 1-phosphate from alpha-D-glucosamine 6-phosphate (route I): step 1/2.</text>
</comment>
<comment type="subunit">
    <text evidence="2">Homodimer.</text>
</comment>
<comment type="miscellaneous">
    <text evidence="3">Present with 2550 molecules/cell in log phase SD medium.</text>
</comment>
<comment type="similarity">
    <text evidence="5">Belongs to the acetyltransferase family. GNA1 subfamily.</text>
</comment>
<keyword id="KW-0002">3D-structure</keyword>
<keyword id="KW-0007">Acetylation</keyword>
<keyword id="KW-0012">Acyltransferase</keyword>
<keyword id="KW-1185">Reference proteome</keyword>
<keyword id="KW-0808">Transferase</keyword>
<protein>
    <recommendedName>
        <fullName>Glucosamine 6-phosphate N-acetyltransferase</fullName>
        <ecNumber evidence="4">2.3.1.4</ecNumber>
    </recommendedName>
    <alternativeName>
        <fullName>Phosphoglucosamine acetylase</fullName>
    </alternativeName>
    <alternativeName>
        <fullName>Phosphoglucosamine transacetylase</fullName>
    </alternativeName>
</protein>
<sequence length="159" mass="18135">MSLPDGFYIRRMEEGDLEQVTETLKVLTTVGTITPESFSKLIKYWNEATVWNDNEDKKIMQYNPMVIVDKRTETVAATGNIIIERKIIHELGLCGHIEDIAVNSKYQGQGLGKLLIDQLVTIGFDYGCYKIILDCDEKNVKFYEKCGFSNAGVEMQIRK</sequence>
<gene>
    <name type="primary">GNA1</name>
    <name type="synonym">PAT1</name>
    <name type="ordered locus">YFL017C</name>
</gene>